<protein>
    <recommendedName>
        <fullName evidence="1">Phosphoribosylformylglycinamidine synthase subunit PurQ</fullName>
        <shortName evidence="1">FGAM synthase</shortName>
        <ecNumber evidence="1">6.3.5.3</ecNumber>
    </recommendedName>
    <alternativeName>
        <fullName evidence="1">Formylglycinamide ribonucleotide amidotransferase subunit I</fullName>
        <shortName evidence="1">FGAR amidotransferase I</shortName>
        <shortName evidence="1">FGAR-AT I</shortName>
    </alternativeName>
    <alternativeName>
        <fullName evidence="1">Glutaminase PurQ</fullName>
        <ecNumber evidence="1">3.5.1.2</ecNumber>
    </alternativeName>
    <alternativeName>
        <fullName evidence="1">Phosphoribosylformylglycinamidine synthase subunit I</fullName>
    </alternativeName>
</protein>
<organism>
    <name type="scientific">Staphylococcus saprophyticus subsp. saprophyticus (strain ATCC 15305 / DSM 20229 / NCIMB 8711 / NCTC 7292 / S-41)</name>
    <dbReference type="NCBI Taxonomy" id="342451"/>
    <lineage>
        <taxon>Bacteria</taxon>
        <taxon>Bacillati</taxon>
        <taxon>Bacillota</taxon>
        <taxon>Bacilli</taxon>
        <taxon>Bacillales</taxon>
        <taxon>Staphylococcaceae</taxon>
        <taxon>Staphylococcus</taxon>
    </lineage>
</organism>
<accession>Q49WJ2</accession>
<keyword id="KW-0067">ATP-binding</keyword>
<keyword id="KW-0963">Cytoplasm</keyword>
<keyword id="KW-0315">Glutamine amidotransferase</keyword>
<keyword id="KW-0378">Hydrolase</keyword>
<keyword id="KW-0436">Ligase</keyword>
<keyword id="KW-0547">Nucleotide-binding</keyword>
<keyword id="KW-0658">Purine biosynthesis</keyword>
<keyword id="KW-1185">Reference proteome</keyword>
<sequence>MKFAVLKFPGSNCDRDMYNAALKSDVEAEYVDYRNTSLDGFDGVLIPGGFSFGDYLRSGAMASVAPITEAVKQFAKEGKPVLGVCNGFQILTEIGLLPGALLHNDSHLFVSRNESLRVVNHNTAFTNLYNEDETVVYPVAHGEGHYYCTQDMYDRLEANNQIILKYVNNPNGSFNDIAGIINEQGNVCGMMPHPERAIEPILGTDSGVKLFQAMVNSWREQNV</sequence>
<dbReference type="EC" id="6.3.5.3" evidence="1"/>
<dbReference type="EC" id="3.5.1.2" evidence="1"/>
<dbReference type="EMBL" id="AP008934">
    <property type="protein sequence ID" value="BAE18867.1"/>
    <property type="molecule type" value="Genomic_DNA"/>
</dbReference>
<dbReference type="RefSeq" id="WP_011303437.1">
    <property type="nucleotide sequence ID" value="NZ_MTGA01000039.1"/>
</dbReference>
<dbReference type="SMR" id="Q49WJ2"/>
<dbReference type="GeneID" id="66867897"/>
<dbReference type="KEGG" id="ssp:SSP1722"/>
<dbReference type="eggNOG" id="COG0047">
    <property type="taxonomic scope" value="Bacteria"/>
</dbReference>
<dbReference type="HOGENOM" id="CLU_001031_3_1_9"/>
<dbReference type="OrthoDB" id="9804441at2"/>
<dbReference type="UniPathway" id="UPA00074">
    <property type="reaction ID" value="UER00128"/>
</dbReference>
<dbReference type="Proteomes" id="UP000006371">
    <property type="component" value="Chromosome"/>
</dbReference>
<dbReference type="GO" id="GO:0005737">
    <property type="term" value="C:cytoplasm"/>
    <property type="evidence" value="ECO:0007669"/>
    <property type="project" value="UniProtKB-SubCell"/>
</dbReference>
<dbReference type="GO" id="GO:0005524">
    <property type="term" value="F:ATP binding"/>
    <property type="evidence" value="ECO:0007669"/>
    <property type="project" value="UniProtKB-KW"/>
</dbReference>
<dbReference type="GO" id="GO:0004359">
    <property type="term" value="F:glutaminase activity"/>
    <property type="evidence" value="ECO:0007669"/>
    <property type="project" value="UniProtKB-EC"/>
</dbReference>
<dbReference type="GO" id="GO:0004642">
    <property type="term" value="F:phosphoribosylformylglycinamidine synthase activity"/>
    <property type="evidence" value="ECO:0007669"/>
    <property type="project" value="UniProtKB-UniRule"/>
</dbReference>
<dbReference type="GO" id="GO:0006189">
    <property type="term" value="P:'de novo' IMP biosynthetic process"/>
    <property type="evidence" value="ECO:0007669"/>
    <property type="project" value="UniProtKB-UniRule"/>
</dbReference>
<dbReference type="CDD" id="cd01740">
    <property type="entry name" value="GATase1_FGAR_AT"/>
    <property type="match status" value="1"/>
</dbReference>
<dbReference type="Gene3D" id="3.40.50.880">
    <property type="match status" value="1"/>
</dbReference>
<dbReference type="HAMAP" id="MF_00421">
    <property type="entry name" value="PurQ"/>
    <property type="match status" value="1"/>
</dbReference>
<dbReference type="InterPro" id="IPR029062">
    <property type="entry name" value="Class_I_gatase-like"/>
</dbReference>
<dbReference type="InterPro" id="IPR010075">
    <property type="entry name" value="PRibForGlyAmidine_synth_PurQ"/>
</dbReference>
<dbReference type="NCBIfam" id="TIGR01737">
    <property type="entry name" value="FGAM_synth_I"/>
    <property type="match status" value="1"/>
</dbReference>
<dbReference type="NCBIfam" id="NF002957">
    <property type="entry name" value="PRK03619.1"/>
    <property type="match status" value="1"/>
</dbReference>
<dbReference type="PANTHER" id="PTHR47552">
    <property type="entry name" value="PHOSPHORIBOSYLFORMYLGLYCINAMIDINE SYNTHASE SUBUNIT PURQ"/>
    <property type="match status" value="1"/>
</dbReference>
<dbReference type="PANTHER" id="PTHR47552:SF1">
    <property type="entry name" value="PHOSPHORIBOSYLFORMYLGLYCINAMIDINE SYNTHASE SUBUNIT PURQ"/>
    <property type="match status" value="1"/>
</dbReference>
<dbReference type="Pfam" id="PF13507">
    <property type="entry name" value="GATase_5"/>
    <property type="match status" value="1"/>
</dbReference>
<dbReference type="PIRSF" id="PIRSF001586">
    <property type="entry name" value="FGAM_synth_I"/>
    <property type="match status" value="1"/>
</dbReference>
<dbReference type="SMART" id="SM01211">
    <property type="entry name" value="GATase_5"/>
    <property type="match status" value="1"/>
</dbReference>
<dbReference type="SUPFAM" id="SSF52317">
    <property type="entry name" value="Class I glutamine amidotransferase-like"/>
    <property type="match status" value="1"/>
</dbReference>
<dbReference type="PROSITE" id="PS51273">
    <property type="entry name" value="GATASE_TYPE_1"/>
    <property type="match status" value="1"/>
</dbReference>
<gene>
    <name evidence="1" type="primary">purQ</name>
    <name type="ordered locus">SSP1722</name>
</gene>
<evidence type="ECO:0000255" key="1">
    <source>
        <dbReference type="HAMAP-Rule" id="MF_00421"/>
    </source>
</evidence>
<feature type="chain" id="PRO_0000252736" description="Phosphoribosylformylglycinamidine synthase subunit PurQ">
    <location>
        <begin position="1"/>
        <end position="223"/>
    </location>
</feature>
<feature type="domain" description="Glutamine amidotransferase type-1" evidence="1">
    <location>
        <begin position="2"/>
        <end position="223"/>
    </location>
</feature>
<feature type="active site" description="Nucleophile" evidence="1">
    <location>
        <position position="85"/>
    </location>
</feature>
<feature type="active site" evidence="1">
    <location>
        <position position="193"/>
    </location>
</feature>
<feature type="active site" evidence="1">
    <location>
        <position position="195"/>
    </location>
</feature>
<name>PURQ_STAS1</name>
<proteinExistence type="inferred from homology"/>
<reference key="1">
    <citation type="journal article" date="2005" name="Proc. Natl. Acad. Sci. U.S.A.">
        <title>Whole genome sequence of Staphylococcus saprophyticus reveals the pathogenesis of uncomplicated urinary tract infection.</title>
        <authorList>
            <person name="Kuroda M."/>
            <person name="Yamashita A."/>
            <person name="Hirakawa H."/>
            <person name="Kumano M."/>
            <person name="Morikawa K."/>
            <person name="Higashide M."/>
            <person name="Maruyama A."/>
            <person name="Inose Y."/>
            <person name="Matoba K."/>
            <person name="Toh H."/>
            <person name="Kuhara S."/>
            <person name="Hattori M."/>
            <person name="Ohta T."/>
        </authorList>
    </citation>
    <scope>NUCLEOTIDE SEQUENCE [LARGE SCALE GENOMIC DNA]</scope>
    <source>
        <strain>ATCC 15305 / DSM 20229 / NCIMB 8711 / NCTC 7292 / S-41</strain>
    </source>
</reference>
<comment type="function">
    <text evidence="1">Part of the phosphoribosylformylglycinamidine synthase complex involved in the purines biosynthetic pathway. Catalyzes the ATP-dependent conversion of formylglycinamide ribonucleotide (FGAR) and glutamine to yield formylglycinamidine ribonucleotide (FGAM) and glutamate. The FGAM synthase complex is composed of three subunits. PurQ produces an ammonia molecule by converting glutamine to glutamate. PurL transfers the ammonia molecule to FGAR to form FGAM in an ATP-dependent manner. PurS interacts with PurQ and PurL and is thought to assist in the transfer of the ammonia molecule from PurQ to PurL.</text>
</comment>
<comment type="catalytic activity">
    <reaction evidence="1">
        <text>N(2)-formyl-N(1)-(5-phospho-beta-D-ribosyl)glycinamide + L-glutamine + ATP + H2O = 2-formamido-N(1)-(5-O-phospho-beta-D-ribosyl)acetamidine + L-glutamate + ADP + phosphate + H(+)</text>
        <dbReference type="Rhea" id="RHEA:17129"/>
        <dbReference type="ChEBI" id="CHEBI:15377"/>
        <dbReference type="ChEBI" id="CHEBI:15378"/>
        <dbReference type="ChEBI" id="CHEBI:29985"/>
        <dbReference type="ChEBI" id="CHEBI:30616"/>
        <dbReference type="ChEBI" id="CHEBI:43474"/>
        <dbReference type="ChEBI" id="CHEBI:58359"/>
        <dbReference type="ChEBI" id="CHEBI:147286"/>
        <dbReference type="ChEBI" id="CHEBI:147287"/>
        <dbReference type="ChEBI" id="CHEBI:456216"/>
        <dbReference type="EC" id="6.3.5.3"/>
    </reaction>
</comment>
<comment type="catalytic activity">
    <reaction evidence="1">
        <text>L-glutamine + H2O = L-glutamate + NH4(+)</text>
        <dbReference type="Rhea" id="RHEA:15889"/>
        <dbReference type="ChEBI" id="CHEBI:15377"/>
        <dbReference type="ChEBI" id="CHEBI:28938"/>
        <dbReference type="ChEBI" id="CHEBI:29985"/>
        <dbReference type="ChEBI" id="CHEBI:58359"/>
        <dbReference type="EC" id="3.5.1.2"/>
    </reaction>
</comment>
<comment type="pathway">
    <text evidence="1">Purine metabolism; IMP biosynthesis via de novo pathway; 5-amino-1-(5-phospho-D-ribosyl)imidazole from N(2)-formyl-N(1)-(5-phospho-D-ribosyl)glycinamide: step 1/2.</text>
</comment>
<comment type="subunit">
    <text evidence="1">Part of the FGAM synthase complex composed of 1 PurL, 1 PurQ and 2 PurS subunits.</text>
</comment>
<comment type="subcellular location">
    <subcellularLocation>
        <location evidence="1">Cytoplasm</location>
    </subcellularLocation>
</comment>